<evidence type="ECO:0000250" key="1"/>
<evidence type="ECO:0000305" key="2"/>
<protein>
    <recommendedName>
        <fullName>Lipid II:glycine glycyltransferase</fullName>
        <ecNumber>2.3.2.16</ecNumber>
    </recommendedName>
    <alternativeName>
        <fullName>Factor essential for expression of methicillin resistance X</fullName>
    </alternativeName>
</protein>
<feature type="chain" id="PRO_0000236172" description="Lipid II:glycine glycyltransferase">
    <location>
        <begin position="1"/>
        <end position="421"/>
    </location>
</feature>
<dbReference type="EC" id="2.3.2.16"/>
<dbReference type="EMBL" id="BA000018">
    <property type="protein sequence ID" value="BAB43354.1"/>
    <property type="molecule type" value="Genomic_DNA"/>
</dbReference>
<dbReference type="PIR" id="A99924">
    <property type="entry name" value="A99924"/>
</dbReference>
<dbReference type="RefSeq" id="WP_000413862.1">
    <property type="nucleotide sequence ID" value="NC_002745.2"/>
</dbReference>
<dbReference type="SMR" id="Q7A447"/>
<dbReference type="EnsemblBacteria" id="BAB43354">
    <property type="protein sequence ID" value="BAB43354"/>
    <property type="gene ID" value="BAB43354"/>
</dbReference>
<dbReference type="KEGG" id="sau:SA2057"/>
<dbReference type="HOGENOM" id="CLU_048411_0_1_9"/>
<dbReference type="GO" id="GO:0005737">
    <property type="term" value="C:cytoplasm"/>
    <property type="evidence" value="ECO:0007669"/>
    <property type="project" value="UniProtKB-SubCell"/>
</dbReference>
<dbReference type="GO" id="GO:0016755">
    <property type="term" value="F:aminoacyltransferase activity"/>
    <property type="evidence" value="ECO:0007669"/>
    <property type="project" value="InterPro"/>
</dbReference>
<dbReference type="GO" id="GO:0071555">
    <property type="term" value="P:cell wall organization"/>
    <property type="evidence" value="ECO:0007669"/>
    <property type="project" value="UniProtKB-KW"/>
</dbReference>
<dbReference type="GO" id="GO:0009252">
    <property type="term" value="P:peptidoglycan biosynthetic process"/>
    <property type="evidence" value="ECO:0007669"/>
    <property type="project" value="UniProtKB-KW"/>
</dbReference>
<dbReference type="GO" id="GO:0008360">
    <property type="term" value="P:regulation of cell shape"/>
    <property type="evidence" value="ECO:0007669"/>
    <property type="project" value="UniProtKB-KW"/>
</dbReference>
<dbReference type="GO" id="GO:0046677">
    <property type="term" value="P:response to antibiotic"/>
    <property type="evidence" value="ECO:0007669"/>
    <property type="project" value="UniProtKB-KW"/>
</dbReference>
<dbReference type="Gene3D" id="1.20.58.90">
    <property type="match status" value="1"/>
</dbReference>
<dbReference type="Gene3D" id="3.40.630.30">
    <property type="match status" value="2"/>
</dbReference>
<dbReference type="InterPro" id="IPR016181">
    <property type="entry name" value="Acyl_CoA_acyltransferase"/>
</dbReference>
<dbReference type="InterPro" id="IPR003447">
    <property type="entry name" value="FEMABX"/>
</dbReference>
<dbReference type="InterPro" id="IPR050644">
    <property type="entry name" value="PG_Glycine_Bridge_Synth"/>
</dbReference>
<dbReference type="PANTHER" id="PTHR36174">
    <property type="entry name" value="LIPID II:GLYCINE GLYCYLTRANSFERASE"/>
    <property type="match status" value="1"/>
</dbReference>
<dbReference type="PANTHER" id="PTHR36174:SF1">
    <property type="entry name" value="LIPID II:GLYCINE GLYCYLTRANSFERASE"/>
    <property type="match status" value="1"/>
</dbReference>
<dbReference type="Pfam" id="PF02388">
    <property type="entry name" value="FemAB"/>
    <property type="match status" value="1"/>
</dbReference>
<dbReference type="SUPFAM" id="SSF55729">
    <property type="entry name" value="Acyl-CoA N-acyltransferases (Nat)"/>
    <property type="match status" value="2"/>
</dbReference>
<dbReference type="PROSITE" id="PS51191">
    <property type="entry name" value="FEMABX"/>
    <property type="match status" value="1"/>
</dbReference>
<comment type="function">
    <text evidence="1">Catalyzes the incorporation of the first glycine of the pentaglycine interpeptide bridge, which is characteristic of the S.aureus peptidoglycan. This glycine is added to the epsilon-amino group of the L-lysine of the membrane-bound lipid II intermediate (GlcNAc-(beta-1,4)-N-acetylmuramic acid(-L-Ala-D-iGln-L-Lys-D-Ala-D-Ala)-pyrophosphoryl-undecaprenol), using glycyl-tRNA(Gly) as donor, in a ribosome-independent mechanism. Involved in methicillin resistance (By similarity).</text>
</comment>
<comment type="catalytic activity">
    <reaction>
        <text>beta-D-GlcNAc-(1-&gt;4)-Mur2Ac(oyl-L-Ala-D-isoglutaminyl-L-Lys-D-Ala-D-Ala)-di-trans,octa-cis-undecaprenyl diphosphate + glycyl-tRNA(Gly) = beta-D-GlcNAc-(1-&gt;4)-Mur2Ac(oyl-L-Ala-D-isoglutaminyl-L-Lys-(N(6)-Gly)-D-Ala-D-Ala)-di-trans,octa-cis-undecaprenyl diphosphate + tRNA(Gly) + H(+)</text>
        <dbReference type="Rhea" id="RHEA:30435"/>
        <dbReference type="Rhea" id="RHEA-COMP:9664"/>
        <dbReference type="Rhea" id="RHEA-COMP:9683"/>
        <dbReference type="ChEBI" id="CHEBI:15378"/>
        <dbReference type="ChEBI" id="CHEBI:62233"/>
        <dbReference type="ChEBI" id="CHEBI:62234"/>
        <dbReference type="ChEBI" id="CHEBI:78442"/>
        <dbReference type="ChEBI" id="CHEBI:78522"/>
        <dbReference type="EC" id="2.3.2.16"/>
    </reaction>
</comment>
<comment type="subunit">
    <text evidence="1">Monomer.</text>
</comment>
<comment type="subcellular location">
    <subcellularLocation>
        <location evidence="2">Cytoplasm</location>
    </subcellularLocation>
</comment>
<comment type="similarity">
    <text evidence="2">Belongs to the FemABX family.</text>
</comment>
<gene>
    <name type="primary">femX</name>
    <name type="synonym">fmhB</name>
    <name type="ordered locus">SA2057</name>
</gene>
<accession>Q7A447</accession>
<keyword id="KW-0012">Acyltransferase</keyword>
<keyword id="KW-0046">Antibiotic resistance</keyword>
<keyword id="KW-0133">Cell shape</keyword>
<keyword id="KW-0961">Cell wall biogenesis/degradation</keyword>
<keyword id="KW-0963">Cytoplasm</keyword>
<keyword id="KW-0573">Peptidoglycan synthesis</keyword>
<keyword id="KW-0808">Transferase</keyword>
<proteinExistence type="evidence at protein level"/>
<name>FEMX_STAAN</name>
<reference key="1">
    <citation type="journal article" date="2001" name="Lancet">
        <title>Whole genome sequencing of meticillin-resistant Staphylococcus aureus.</title>
        <authorList>
            <person name="Kuroda M."/>
            <person name="Ohta T."/>
            <person name="Uchiyama I."/>
            <person name="Baba T."/>
            <person name="Yuzawa H."/>
            <person name="Kobayashi I."/>
            <person name="Cui L."/>
            <person name="Oguchi A."/>
            <person name="Aoki K."/>
            <person name="Nagai Y."/>
            <person name="Lian J.-Q."/>
            <person name="Ito T."/>
            <person name="Kanamori M."/>
            <person name="Matsumaru H."/>
            <person name="Maruyama A."/>
            <person name="Murakami H."/>
            <person name="Hosoyama A."/>
            <person name="Mizutani-Ui Y."/>
            <person name="Takahashi N.K."/>
            <person name="Sawano T."/>
            <person name="Inoue R."/>
            <person name="Kaito C."/>
            <person name="Sekimizu K."/>
            <person name="Hirakawa H."/>
            <person name="Kuhara S."/>
            <person name="Goto S."/>
            <person name="Yabuzaki J."/>
            <person name="Kanehisa M."/>
            <person name="Yamashita A."/>
            <person name="Oshima K."/>
            <person name="Furuya K."/>
            <person name="Yoshino C."/>
            <person name="Shiba T."/>
            <person name="Hattori M."/>
            <person name="Ogasawara N."/>
            <person name="Hayashi H."/>
            <person name="Hiramatsu K."/>
        </authorList>
    </citation>
    <scope>NUCLEOTIDE SEQUENCE [LARGE SCALE GENOMIC DNA]</scope>
    <source>
        <strain>N315</strain>
    </source>
</reference>
<reference key="2">
    <citation type="submission" date="2007-10" db="UniProtKB">
        <title>Shotgun proteomic analysis of total and membrane protein extracts of S. aureus strain N315.</title>
        <authorList>
            <person name="Vaezzadeh A.R."/>
            <person name="Deshusses J."/>
            <person name="Lescuyer P."/>
            <person name="Hochstrasser D.F."/>
        </authorList>
    </citation>
    <scope>IDENTIFICATION BY MASS SPECTROMETRY [LARGE SCALE ANALYSIS]</scope>
    <source>
        <strain>N315</strain>
    </source>
</reference>
<organism>
    <name type="scientific">Staphylococcus aureus (strain N315)</name>
    <dbReference type="NCBI Taxonomy" id="158879"/>
    <lineage>
        <taxon>Bacteria</taxon>
        <taxon>Bacillati</taxon>
        <taxon>Bacillota</taxon>
        <taxon>Bacilli</taxon>
        <taxon>Bacillales</taxon>
        <taxon>Staphylococcaceae</taxon>
        <taxon>Staphylococcus</taxon>
    </lineage>
</organism>
<sequence length="421" mass="48536">MEKMHITNQEHDAFVKSHPNGDLLQLTKWAETKKLTGWYARRIAVGRDGEVQGVAQLLFKKVPKLPYTLCYISRGFVVDYSNKEALNALLDSAKEIAKAEKAYAIKIDPDVEVDKGTDALQNLKALGFKHKGFKEGLSKDYIQPRMTMITPIDKNDDELLNSFERRNRSKVRLALKRGTTVERSDREGLKTFAELMKITGERDGFLTRDISYFENIYDALHEDGDAELFLVKLDPKENIAKVNQELNELHAEIAKWQQKMETSEKQAKKAQNMINDAQNKIAKNEDLKRDLEALEKEHPEGIYLSGALLMFAGSKSYYLYGASSNEFRDFLPNHHMQYTMMKYAREHGATTYDFGGTDNDPDKDSEHYGLWAFKKVWGTYLSEKIGEFDYILNQPLYQLIEQVKPRLTKAKIKISRKLKRK</sequence>